<evidence type="ECO:0000250" key="1">
    <source>
        <dbReference type="UniProtKB" id="Q13183"/>
    </source>
</evidence>
<evidence type="ECO:0000255" key="2"/>
<evidence type="ECO:0000256" key="3">
    <source>
        <dbReference type="SAM" id="MobiDB-lite"/>
    </source>
</evidence>
<evidence type="ECO:0000269" key="4">
    <source>
    </source>
</evidence>
<evidence type="ECO:0000269" key="5">
    <source>
    </source>
</evidence>
<evidence type="ECO:0000305" key="6"/>
<dbReference type="EMBL" id="AF201903">
    <property type="protein sequence ID" value="AAG15426.1"/>
    <property type="molecule type" value="mRNA"/>
</dbReference>
<dbReference type="EMBL" id="BC013493">
    <property type="protein sequence ID" value="AAH13493.1"/>
    <property type="molecule type" value="mRNA"/>
</dbReference>
<dbReference type="CCDS" id="CCDS25103.1"/>
<dbReference type="RefSeq" id="NP_071856.1">
    <property type="nucleotide sequence ID" value="NM_022411.4"/>
</dbReference>
<dbReference type="SMR" id="Q9ES88"/>
<dbReference type="FunCoup" id="Q9ES88">
    <property type="interactions" value="58"/>
</dbReference>
<dbReference type="STRING" id="10090.ENSMUSP00000001122"/>
<dbReference type="iPTMnet" id="Q9ES88"/>
<dbReference type="PhosphoSitePlus" id="Q9ES88"/>
<dbReference type="SwissPalm" id="Q9ES88"/>
<dbReference type="PaxDb" id="10090-ENSMUSP00000001122"/>
<dbReference type="ProteomicsDB" id="255441"/>
<dbReference type="Antibodypedia" id="14078">
    <property type="antibodies" value="72 antibodies from 22 providers"/>
</dbReference>
<dbReference type="DNASU" id="20500"/>
<dbReference type="Ensembl" id="ENSMUST00000001122.6">
    <property type="protein sequence ID" value="ENSMUSP00000001122.6"/>
    <property type="gene ID" value="ENSMUSG00000001095.6"/>
</dbReference>
<dbReference type="GeneID" id="20500"/>
<dbReference type="KEGG" id="mmu:20500"/>
<dbReference type="UCSC" id="uc007kjf.1">
    <property type="organism name" value="mouse"/>
</dbReference>
<dbReference type="AGR" id="MGI:1276558"/>
<dbReference type="CTD" id="9058"/>
<dbReference type="MGI" id="MGI:1276558">
    <property type="gene designation" value="Slc13a2"/>
</dbReference>
<dbReference type="VEuPathDB" id="HostDB:ENSMUSG00000001095"/>
<dbReference type="eggNOG" id="KOG1281">
    <property type="taxonomic scope" value="Eukaryota"/>
</dbReference>
<dbReference type="GeneTree" id="ENSGT01030000234550"/>
<dbReference type="HOGENOM" id="CLU_005170_9_1_1"/>
<dbReference type="InParanoid" id="Q9ES88"/>
<dbReference type="OMA" id="MLAINSW"/>
<dbReference type="OrthoDB" id="6493944at2759"/>
<dbReference type="PhylomeDB" id="Q9ES88"/>
<dbReference type="TreeFam" id="TF312913"/>
<dbReference type="Reactome" id="R-MMU-433137">
    <property type="pathway name" value="Sodium-coupled sulphate, di- and tri-carboxylate transporters"/>
</dbReference>
<dbReference type="BioGRID-ORCS" id="20500">
    <property type="hits" value="4 hits in 77 CRISPR screens"/>
</dbReference>
<dbReference type="PRO" id="PR:Q9ES88"/>
<dbReference type="Proteomes" id="UP000000589">
    <property type="component" value="Chromosome 11"/>
</dbReference>
<dbReference type="RNAct" id="Q9ES88">
    <property type="molecule type" value="protein"/>
</dbReference>
<dbReference type="Bgee" id="ENSMUSG00000001095">
    <property type="expression patterns" value="Expressed in small intestine Peyer's patch and 59 other cell types or tissues"/>
</dbReference>
<dbReference type="GO" id="GO:0016324">
    <property type="term" value="C:apical plasma membrane"/>
    <property type="evidence" value="ECO:0000250"/>
    <property type="project" value="UniProtKB"/>
</dbReference>
<dbReference type="GO" id="GO:0015139">
    <property type="term" value="F:alpha-ketoglutarate transmembrane transporter activity"/>
    <property type="evidence" value="ECO:0000250"/>
    <property type="project" value="UniProtKB"/>
</dbReference>
<dbReference type="GO" id="GO:0015138">
    <property type="term" value="F:fumarate transmembrane transporter activity"/>
    <property type="evidence" value="ECO:0000250"/>
    <property type="project" value="UniProtKB"/>
</dbReference>
<dbReference type="GO" id="GO:0017153">
    <property type="term" value="F:sodium:dicarboxylate symporter activity"/>
    <property type="evidence" value="ECO:0000314"/>
    <property type="project" value="UniProtKB"/>
</dbReference>
<dbReference type="GO" id="GO:0015141">
    <property type="term" value="F:succinate transmembrane transporter activity"/>
    <property type="evidence" value="ECO:0000314"/>
    <property type="project" value="UniProtKB"/>
</dbReference>
<dbReference type="GO" id="GO:0015742">
    <property type="term" value="P:alpha-ketoglutarate transport"/>
    <property type="evidence" value="ECO:0000250"/>
    <property type="project" value="UniProtKB"/>
</dbReference>
<dbReference type="GO" id="GO:0071285">
    <property type="term" value="P:cellular response to lithium ion"/>
    <property type="evidence" value="ECO:0007669"/>
    <property type="project" value="Ensembl"/>
</dbReference>
<dbReference type="GO" id="GO:0015741">
    <property type="term" value="P:fumarate transport"/>
    <property type="evidence" value="ECO:0000250"/>
    <property type="project" value="UniProtKB"/>
</dbReference>
<dbReference type="GO" id="GO:0071422">
    <property type="term" value="P:succinate transmembrane transport"/>
    <property type="evidence" value="ECO:0000314"/>
    <property type="project" value="UniProtKB"/>
</dbReference>
<dbReference type="CDD" id="cd01115">
    <property type="entry name" value="SLC13_permease"/>
    <property type="match status" value="1"/>
</dbReference>
<dbReference type="InterPro" id="IPR031312">
    <property type="entry name" value="Na/sul_symport_CS"/>
</dbReference>
<dbReference type="InterPro" id="IPR001898">
    <property type="entry name" value="SLC13A/DASS"/>
</dbReference>
<dbReference type="PANTHER" id="PTHR10283">
    <property type="entry name" value="SOLUTE CARRIER FAMILY 13 MEMBER"/>
    <property type="match status" value="1"/>
</dbReference>
<dbReference type="PANTHER" id="PTHR10283:SF82">
    <property type="entry name" value="SOLUTE CARRIER FAMILY 13 MEMBER 2"/>
    <property type="match status" value="1"/>
</dbReference>
<dbReference type="Pfam" id="PF00939">
    <property type="entry name" value="Na_sulph_symp"/>
    <property type="match status" value="1"/>
</dbReference>
<dbReference type="PROSITE" id="PS01271">
    <property type="entry name" value="NA_SULFATE"/>
    <property type="match status" value="1"/>
</dbReference>
<accession>Q9ES88</accession>
<reference key="1">
    <citation type="journal article" date="2000" name="Am. J. Physiol.">
        <title>Molecular cloning, chromosomal organization and functional characterization of a sodium/dicarboxylate cotransporter from mouse kidney.</title>
        <authorList>
            <person name="Pajor A.M."/>
            <person name="Sun N.N."/>
        </authorList>
    </citation>
    <scope>NUCLEOTIDE SEQUENCE [MRNA]</scope>
    <scope>FUNCTION</scope>
    <scope>TRANSPORTER ACTIVITY</scope>
    <scope>BIOPHYSICOCHEMICAL PROPERTIES</scope>
    <scope>TISSUE SPECIFICITY</scope>
    <source>
        <tissue>Kidney</tissue>
    </source>
</reference>
<reference key="2">
    <citation type="journal article" date="2004" name="Genome Res.">
        <title>The status, quality, and expansion of the NIH full-length cDNA project: the Mammalian Gene Collection (MGC).</title>
        <authorList>
            <consortium name="The MGC Project Team"/>
        </authorList>
    </citation>
    <scope>NUCLEOTIDE SEQUENCE [LARGE SCALE MRNA]</scope>
    <source>
        <tissue>Colon</tissue>
    </source>
</reference>
<reference key="3">
    <citation type="journal article" date="2007" name="Kidney Int.">
        <title>Generation and characterization of sodium-dicarboxylate cotransporter-deficient mice.</title>
        <authorList>
            <person name="Ho H.T."/>
            <person name="Ko B.C."/>
            <person name="Cheung A.K."/>
            <person name="Lam A.K."/>
            <person name="Tam S."/>
            <person name="Chung S.K."/>
            <person name="Chung S.S."/>
        </authorList>
    </citation>
    <scope>DISRUPTION PHENOTYPE</scope>
    <scope>FUNCTION</scope>
</reference>
<name>S13A2_MOUSE</name>
<comment type="function">
    <text evidence="1 4 5">Low-affinity sodium-dicarboxylate cotransporter, that mediates the entry of citric acid cycle intermediates, such as succinate, citrate, fumarate and alpha-ketoglutarate (2-oxoglutarate) into the small intestine and renal proximal tubule (By similarity) (PubMed:10966927). Can transport citrate in a Na(+)-dependent manner, recognizing the divalent form of citrate rather than the trivalent form which is normally found in blood (PubMed:10966927). Transports the dicarboxylate into the cell with a probable stoichiometry of 3 Na(+) for 1 divalent dicarboxylate, rendering the process electrogenic (By similarity). Has a critical role in renal dicarboxylate transport (PubMed:17410095).</text>
</comment>
<comment type="catalytic activity">
    <reaction evidence="4">
        <text>succinate(out) + 3 Na(+)(out) = succinate(in) + 3 Na(+)(in)</text>
        <dbReference type="Rhea" id="RHEA:71919"/>
        <dbReference type="ChEBI" id="CHEBI:29101"/>
        <dbReference type="ChEBI" id="CHEBI:30031"/>
    </reaction>
</comment>
<comment type="catalytic activity">
    <reaction evidence="1">
        <text>fumarate(out) + 3 Na(+)(out) = fumarate(in) + 3 Na(+)(in)</text>
        <dbReference type="Rhea" id="RHEA:71931"/>
        <dbReference type="ChEBI" id="CHEBI:29101"/>
        <dbReference type="ChEBI" id="CHEBI:29806"/>
    </reaction>
</comment>
<comment type="catalytic activity">
    <reaction evidence="1">
        <text>2-oxoglutarate(out) + 3 Na(+)(out) = 2-oxoglutarate(in) + 3 Na(+)(in)</text>
        <dbReference type="Rhea" id="RHEA:71939"/>
        <dbReference type="ChEBI" id="CHEBI:16810"/>
        <dbReference type="ChEBI" id="CHEBI:29101"/>
    </reaction>
</comment>
<comment type="activity regulation">
    <text evidence="1">Li(+) decreases succinate transport in the presence of Na(+), by competing at one of the three cation binding sites.</text>
</comment>
<comment type="biophysicochemical properties">
    <kinetics>
        <KM evidence="4">0.6 mM for citrate</KM>
        <KM evidence="4">0.35 mM for succinate</KM>
    </kinetics>
</comment>
<comment type="subcellular location">
    <subcellularLocation>
        <location evidence="1">Apical cell membrane</location>
        <topology evidence="2">Multi-pass membrane protein</topology>
    </subcellularLocation>
</comment>
<comment type="tissue specificity">
    <text evidence="4">Highly expressed in kidney and small intestine. Not detectable in brain, heart, stomach and skeletal muscle.</text>
</comment>
<comment type="disruption phenotype">
    <text evidence="5">Deficient mice display increased urinary excretion of citrate, alpha-ketoglutarate, fumarate, and malate and a modest increase in succinate. Despite the increased excretion, there is no significant change in plasma citrate concentration. No other phenotypic change is identified in these mice. Transporter deficiency do not affect renal function under normal physiological conditions, nor to response to renal injury.</text>
</comment>
<comment type="similarity">
    <text evidence="6">Belongs to the SLC13A/DASS transporter (TC 2.A.47) family. NADC subfamily.</text>
</comment>
<feature type="chain" id="PRO_0000172489" description="Solute carrier family 13 member 2">
    <location>
        <begin position="1"/>
        <end position="586"/>
    </location>
</feature>
<feature type="transmembrane region" description="Helical" evidence="2">
    <location>
        <begin position="13"/>
        <end position="33"/>
    </location>
</feature>
<feature type="transmembrane region" description="Helical" evidence="2">
    <location>
        <begin position="53"/>
        <end position="73"/>
    </location>
</feature>
<feature type="transmembrane region" description="Helical" evidence="2">
    <location>
        <begin position="86"/>
        <end position="106"/>
    </location>
</feature>
<feature type="transmembrane region" description="Helical" evidence="2">
    <location>
        <begin position="215"/>
        <end position="235"/>
    </location>
</feature>
<feature type="transmembrane region" description="Helical" evidence="2">
    <location>
        <begin position="264"/>
        <end position="284"/>
    </location>
</feature>
<feature type="transmembrane region" description="Helical" evidence="2">
    <location>
        <begin position="319"/>
        <end position="339"/>
    </location>
</feature>
<feature type="transmembrane region" description="Helical" evidence="2">
    <location>
        <begin position="366"/>
        <end position="386"/>
    </location>
</feature>
<feature type="transmembrane region" description="Helical" evidence="2">
    <location>
        <begin position="407"/>
        <end position="427"/>
    </location>
</feature>
<feature type="transmembrane region" description="Helical" evidence="2">
    <location>
        <begin position="445"/>
        <end position="465"/>
    </location>
</feature>
<feature type="transmembrane region" description="Helical" evidence="2">
    <location>
        <begin position="478"/>
        <end position="498"/>
    </location>
</feature>
<feature type="transmembrane region" description="Helical" evidence="2">
    <location>
        <begin position="506"/>
        <end position="526"/>
    </location>
</feature>
<feature type="transmembrane region" description="Helical" evidence="2">
    <location>
        <begin position="535"/>
        <end position="555"/>
    </location>
</feature>
<feature type="region of interest" description="Disordered" evidence="3">
    <location>
        <begin position="165"/>
        <end position="209"/>
    </location>
</feature>
<feature type="compositionally biased region" description="Polar residues" evidence="3">
    <location>
        <begin position="165"/>
        <end position="175"/>
    </location>
</feature>
<proteinExistence type="evidence at protein level"/>
<protein>
    <recommendedName>
        <fullName>Solute carrier family 13 member 2</fullName>
    </recommendedName>
    <alternativeName>
        <fullName>Na(+)/dicarboxylate cotransporter 1</fullName>
        <shortName>NaDC-1</shortName>
    </alternativeName>
    <alternativeName>
        <fullName>Renal sodium/dicarboxylate cotransporter</fullName>
    </alternativeName>
</protein>
<gene>
    <name type="primary">Slc13a2</name>
    <name type="synonym">Nadc1</name>
    <name type="synonym">Sdct1</name>
</gene>
<keyword id="KW-1003">Cell membrane</keyword>
<keyword id="KW-0406">Ion transport</keyword>
<keyword id="KW-0472">Membrane</keyword>
<keyword id="KW-1185">Reference proteome</keyword>
<keyword id="KW-0915">Sodium</keyword>
<keyword id="KW-0739">Sodium transport</keyword>
<keyword id="KW-0769">Symport</keyword>
<keyword id="KW-0812">Transmembrane</keyword>
<keyword id="KW-1133">Transmembrane helix</keyword>
<keyword id="KW-0813">Transport</keyword>
<sequence length="586" mass="64111">MATCWQALWAYRSYLIVLCLPIFLLPLPLIVQTKEAYCAYSIILMALLWCTEALPLAVTALFPIILFPLMGIMEASKVCLEYFKDTNILFVGGLMVAIAVEHWNLHKRIALGVLLIIGVRPALLLLGFMLVTAFLSMWISNTATTAMMLPIGYAVLEQLQGSQKDVEEGNSNPSFELQEASPQKEETKLDNGQAVSVSSEPRAQKTKEHHRFSQGLSLCICYSASIGGIATLTGTTPNLVLQGQVNSIFPENSNVVNFASWFGFAFPTMVILLLLAWLWLQVLFLGVNFRKNFGFGEGEEERKQAAFQVIKTQHRLLGPMSFAEKAVTFLFVLLVVLWFTREPGFFPGWGDTAFANKKGQSMVSDGTVAIFISLIMFIIPSKIPGLTEDPKKPGKLKAPPAILTWKTVNDKMPWNILILLGGGFALAKGSEESGLSKWLGDKLTPLQHVPPSATVLILSLLVAIFTECTSNVATTTLFLPILASMAQAICLHPLYVMLPCTLAASLAFMLPVATPPNAIVFSFGGLKVSDMARAGFLLNIIGVLTITLSINSWSIPIFKLDTFPTWAYSNTSQCLLNPPNSTVPGH</sequence>
<organism>
    <name type="scientific">Mus musculus</name>
    <name type="common">Mouse</name>
    <dbReference type="NCBI Taxonomy" id="10090"/>
    <lineage>
        <taxon>Eukaryota</taxon>
        <taxon>Metazoa</taxon>
        <taxon>Chordata</taxon>
        <taxon>Craniata</taxon>
        <taxon>Vertebrata</taxon>
        <taxon>Euteleostomi</taxon>
        <taxon>Mammalia</taxon>
        <taxon>Eutheria</taxon>
        <taxon>Euarchontoglires</taxon>
        <taxon>Glires</taxon>
        <taxon>Rodentia</taxon>
        <taxon>Myomorpha</taxon>
        <taxon>Muroidea</taxon>
        <taxon>Muridae</taxon>
        <taxon>Murinae</taxon>
        <taxon>Mus</taxon>
        <taxon>Mus</taxon>
    </lineage>
</organism>